<reference key="1">
    <citation type="journal article" date="1971" name="Biochem. Biophys. Res. Commun.">
        <title>Amino acid sequence of cytotoxin I from the venom of the Indian cobra (Naja naja).</title>
        <authorList>
            <person name="Hayashi K."/>
            <person name="Takechi M."/>
            <person name="Sasaki T."/>
        </authorList>
    </citation>
    <scope>PROTEIN SEQUENCE</scope>
    <scope>SUBCELLULAR LOCATION</scope>
    <source>
        <tissue>Venom</tissue>
    </source>
</reference>
<reference key="2">
    <citation type="journal article" date="1995" name="Int. J. Pept. Protein Res.">
        <title>Primary structure of a cytotoxin-like basic protein from Naja naja naja (Indian cobra) venom.</title>
        <authorList>
            <person name="Babu A.S."/>
            <person name="Puri K.D."/>
            <person name="Gowda T.V."/>
        </authorList>
    </citation>
    <scope>PROTEIN SEQUENCE</scope>
</reference>
<accession>P01447</accession>
<accession>Q9PSN2</accession>
<keyword id="KW-0123">Cardiotoxin</keyword>
<keyword id="KW-0204">Cytolysis</keyword>
<keyword id="KW-0903">Direct protein sequencing</keyword>
<keyword id="KW-1015">Disulfide bond</keyword>
<keyword id="KW-0472">Membrane</keyword>
<keyword id="KW-1185">Reference proteome</keyword>
<keyword id="KW-0964">Secreted</keyword>
<keyword id="KW-1052">Target cell membrane</keyword>
<keyword id="KW-1053">Target membrane</keyword>
<keyword id="KW-0800">Toxin</keyword>
<name>3SA1_NAJNA</name>
<evidence type="ECO:0000250" key="1">
    <source>
        <dbReference type="UniProtKB" id="P60301"/>
    </source>
</evidence>
<evidence type="ECO:0000250" key="2">
    <source>
        <dbReference type="UniProtKB" id="P60304"/>
    </source>
</evidence>
<evidence type="ECO:0000269" key="3">
    <source>
    </source>
</evidence>
<evidence type="ECO:0000269" key="4">
    <source>
    </source>
</evidence>
<evidence type="ECO:0000303" key="5">
    <source>
    </source>
</evidence>
<evidence type="ECO:0000303" key="6">
    <source>
    </source>
</evidence>
<evidence type="ECO:0000305" key="7"/>
<protein>
    <recommendedName>
        <fullName>Cytotoxin 1</fullName>
    </recommendedName>
    <alternativeName>
        <fullName evidence="5">Cobramine-A</fullName>
    </alternativeName>
    <alternativeName>
        <fullName evidence="5">Cytotoxin I</fullName>
    </alternativeName>
    <alternativeName>
        <fullName>Cytotoxin XI</fullName>
    </alternativeName>
    <alternativeName>
        <fullName evidence="6">Cytotoxin-like basic protein</fullName>
        <shortName evidence="6">CLBP</shortName>
    </alternativeName>
</protein>
<proteinExistence type="evidence at protein level"/>
<feature type="chain" id="PRO_0000093510" description="Cytotoxin 1" evidence="3 4">
    <location>
        <begin position="1"/>
        <end position="60"/>
    </location>
</feature>
<feature type="disulfide bond" evidence="1">
    <location>
        <begin position="3"/>
        <end position="21"/>
    </location>
</feature>
<feature type="disulfide bond" evidence="1">
    <location>
        <begin position="14"/>
        <end position="38"/>
    </location>
</feature>
<feature type="disulfide bond" evidence="1">
    <location>
        <begin position="42"/>
        <end position="53"/>
    </location>
</feature>
<feature type="disulfide bond" evidence="1">
    <location>
        <begin position="54"/>
        <end position="59"/>
    </location>
</feature>
<feature type="sequence conflict" description="In Ref. 2; AA sequence." evidence="7" ref="2">
    <original>VLK</original>
    <variation>LVT</variation>
    <location>
        <begin position="48"/>
        <end position="50"/>
    </location>
</feature>
<feature type="sequence conflict" description="In Ref. 2; AA sequence." evidence="7" ref="2">
    <original>N</original>
    <variation>NL</variation>
    <location>
        <position position="60"/>
    </location>
</feature>
<organism>
    <name type="scientific">Naja naja</name>
    <name type="common">Indian cobra</name>
    <dbReference type="NCBI Taxonomy" id="35670"/>
    <lineage>
        <taxon>Eukaryota</taxon>
        <taxon>Metazoa</taxon>
        <taxon>Chordata</taxon>
        <taxon>Craniata</taxon>
        <taxon>Vertebrata</taxon>
        <taxon>Euteleostomi</taxon>
        <taxon>Lepidosauria</taxon>
        <taxon>Squamata</taxon>
        <taxon>Bifurcata</taxon>
        <taxon>Unidentata</taxon>
        <taxon>Episquamata</taxon>
        <taxon>Toxicofera</taxon>
        <taxon>Serpentes</taxon>
        <taxon>Colubroidea</taxon>
        <taxon>Elapidae</taxon>
        <taxon>Elapinae</taxon>
        <taxon>Naja</taxon>
    </lineage>
</organism>
<comment type="function">
    <text evidence="1 2">Shows cytolytic activity on many different cells by forming pore in lipid membranes. In vivo, increases heart rate or kills the animal by cardiac arrest. In addition, it binds to heparin with high affinity, interacts with Kv channel-interacting protein 1 (KCNIP1) in a calcium-independent manner, and binds to integrin alpha-V/beta-3 (ITGAV/ITGB3) with moderate affinity.</text>
</comment>
<comment type="subunit">
    <text evidence="1">Monomer in solution; Homodimer and oligomer in the presence of negatively charged lipids forming a pore with a size ranging between 20 and 30 Angstroms.</text>
</comment>
<comment type="subcellular location">
    <subcellularLocation>
        <location evidence="3">Secreted</location>
    </subcellularLocation>
    <subcellularLocation>
        <location evidence="1">Target cell membrane</location>
    </subcellularLocation>
</comment>
<comment type="tissue specificity">
    <text evidence="7">Expressed by the venom gland.</text>
</comment>
<comment type="miscellaneous">
    <text evidence="7">Is classified as a S-type cytotoxin, since a serine residue stands at position 28 (Ser-29 in standard classification).</text>
</comment>
<comment type="similarity">
    <text evidence="7">Belongs to the three-finger toxin family. Short-chain subfamily. Type IA cytotoxin sub-subfamily.</text>
</comment>
<sequence>LKCNKLIPLAYKTCPAGKNLCYKMYMVSNKTVPVKRGCIDVCPKNSLVLKYECCNTDRCN</sequence>
<dbReference type="PIR" id="A01713">
    <property type="entry name" value="H3NJ1I"/>
</dbReference>
<dbReference type="SMR" id="P01447"/>
<dbReference type="Proteomes" id="UP000694559">
    <property type="component" value="Unplaced"/>
</dbReference>
<dbReference type="GO" id="GO:0005576">
    <property type="term" value="C:extracellular region"/>
    <property type="evidence" value="ECO:0007669"/>
    <property type="project" value="UniProtKB-SubCell"/>
</dbReference>
<dbReference type="GO" id="GO:0016020">
    <property type="term" value="C:membrane"/>
    <property type="evidence" value="ECO:0007669"/>
    <property type="project" value="UniProtKB-KW"/>
</dbReference>
<dbReference type="GO" id="GO:0044218">
    <property type="term" value="C:other organism cell membrane"/>
    <property type="evidence" value="ECO:0007669"/>
    <property type="project" value="UniProtKB-KW"/>
</dbReference>
<dbReference type="GO" id="GO:0090729">
    <property type="term" value="F:toxin activity"/>
    <property type="evidence" value="ECO:0007669"/>
    <property type="project" value="UniProtKB-KW"/>
</dbReference>
<dbReference type="GO" id="GO:0031640">
    <property type="term" value="P:killing of cells of another organism"/>
    <property type="evidence" value="ECO:0007669"/>
    <property type="project" value="UniProtKB-KW"/>
</dbReference>
<dbReference type="CDD" id="cd00206">
    <property type="entry name" value="TFP_snake_toxin"/>
    <property type="match status" value="1"/>
</dbReference>
<dbReference type="FunFam" id="2.10.60.10:FF:000024">
    <property type="entry name" value="Cytotoxin 1"/>
    <property type="match status" value="1"/>
</dbReference>
<dbReference type="Gene3D" id="2.10.60.10">
    <property type="entry name" value="CD59"/>
    <property type="match status" value="1"/>
</dbReference>
<dbReference type="InterPro" id="IPR003572">
    <property type="entry name" value="Cytotoxin_Cobra"/>
</dbReference>
<dbReference type="InterPro" id="IPR003571">
    <property type="entry name" value="Snake_3FTx"/>
</dbReference>
<dbReference type="InterPro" id="IPR045860">
    <property type="entry name" value="Snake_toxin-like_sf"/>
</dbReference>
<dbReference type="InterPro" id="IPR018354">
    <property type="entry name" value="Snake_toxin_con_site"/>
</dbReference>
<dbReference type="InterPro" id="IPR054131">
    <property type="entry name" value="Toxin_cobra-type"/>
</dbReference>
<dbReference type="Pfam" id="PF21947">
    <property type="entry name" value="Toxin_cobra-type"/>
    <property type="match status" value="1"/>
</dbReference>
<dbReference type="PRINTS" id="PR00282">
    <property type="entry name" value="CYTOTOXIN"/>
</dbReference>
<dbReference type="SUPFAM" id="SSF57302">
    <property type="entry name" value="Snake toxin-like"/>
    <property type="match status" value="1"/>
</dbReference>
<dbReference type="PROSITE" id="PS00272">
    <property type="entry name" value="SNAKE_TOXIN"/>
    <property type="match status" value="1"/>
</dbReference>